<accession>B1XC29</accession>
<comment type="subcellular location">
    <subcellularLocation>
        <location evidence="1">Cell inner membrane</location>
        <topology evidence="1">Multi-pass membrane protein</topology>
    </subcellularLocation>
</comment>
<comment type="similarity">
    <text evidence="1">Belongs to the PsiE family.</text>
</comment>
<sequence length="136" mass="15597">MTSLSRPRVEFISTILQTVLNLGLLCLGLILVVFLGKETVHLADVLFAPEQTSKYELVEGLVVYFLYFEFIALIVKYFQSGFHFPLRYFVYIGITAIVRLIIVDHKSPLDVLIYSAAILLLVITLWLCNSKRLKRE</sequence>
<feature type="chain" id="PRO_1000136211" description="Protein PsiE">
    <location>
        <begin position="1"/>
        <end position="136"/>
    </location>
</feature>
<feature type="transmembrane region" description="Helical" evidence="1">
    <location>
        <begin position="15"/>
        <end position="35"/>
    </location>
</feature>
<feature type="transmembrane region" description="Helical" evidence="1">
    <location>
        <begin position="55"/>
        <end position="75"/>
    </location>
</feature>
<feature type="transmembrane region" description="Helical" evidence="1">
    <location>
        <begin position="82"/>
        <end position="102"/>
    </location>
</feature>
<feature type="transmembrane region" description="Helical" evidence="1">
    <location>
        <begin position="108"/>
        <end position="128"/>
    </location>
</feature>
<evidence type="ECO:0000255" key="1">
    <source>
        <dbReference type="HAMAP-Rule" id="MF_01048"/>
    </source>
</evidence>
<name>PSIE_ECODH</name>
<organism>
    <name type="scientific">Escherichia coli (strain K12 / DH10B)</name>
    <dbReference type="NCBI Taxonomy" id="316385"/>
    <lineage>
        <taxon>Bacteria</taxon>
        <taxon>Pseudomonadati</taxon>
        <taxon>Pseudomonadota</taxon>
        <taxon>Gammaproteobacteria</taxon>
        <taxon>Enterobacterales</taxon>
        <taxon>Enterobacteriaceae</taxon>
        <taxon>Escherichia</taxon>
    </lineage>
</organism>
<reference key="1">
    <citation type="journal article" date="2008" name="J. Bacteriol.">
        <title>The complete genome sequence of Escherichia coli DH10B: insights into the biology of a laboratory workhorse.</title>
        <authorList>
            <person name="Durfee T."/>
            <person name="Nelson R."/>
            <person name="Baldwin S."/>
            <person name="Plunkett G. III"/>
            <person name="Burland V."/>
            <person name="Mau B."/>
            <person name="Petrosino J.F."/>
            <person name="Qin X."/>
            <person name="Muzny D.M."/>
            <person name="Ayele M."/>
            <person name="Gibbs R.A."/>
            <person name="Csorgo B."/>
            <person name="Posfai G."/>
            <person name="Weinstock G.M."/>
            <person name="Blattner F.R."/>
        </authorList>
    </citation>
    <scope>NUCLEOTIDE SEQUENCE [LARGE SCALE GENOMIC DNA]</scope>
    <source>
        <strain>K12 / DH10B</strain>
    </source>
</reference>
<dbReference type="EMBL" id="CP000948">
    <property type="protein sequence ID" value="ACB05029.1"/>
    <property type="molecule type" value="Genomic_DNA"/>
</dbReference>
<dbReference type="RefSeq" id="WP_000202902.1">
    <property type="nucleotide sequence ID" value="NC_010473.1"/>
</dbReference>
<dbReference type="SMR" id="B1XC29"/>
<dbReference type="GeneID" id="93777857"/>
<dbReference type="KEGG" id="ecd:ECDH10B_4219"/>
<dbReference type="HOGENOM" id="CLU_127561_0_1_6"/>
<dbReference type="GO" id="GO:0005886">
    <property type="term" value="C:plasma membrane"/>
    <property type="evidence" value="ECO:0007669"/>
    <property type="project" value="UniProtKB-SubCell"/>
</dbReference>
<dbReference type="GO" id="GO:0016036">
    <property type="term" value="P:cellular response to phosphate starvation"/>
    <property type="evidence" value="ECO:0007669"/>
    <property type="project" value="InterPro"/>
</dbReference>
<dbReference type="HAMAP" id="MF_01048">
    <property type="entry name" value="PsiE"/>
    <property type="match status" value="1"/>
</dbReference>
<dbReference type="InterPro" id="IPR009315">
    <property type="entry name" value="P_starv_induced_PsiE"/>
</dbReference>
<dbReference type="InterPro" id="IPR020948">
    <property type="entry name" value="P_starv_induced_PsiE-like"/>
</dbReference>
<dbReference type="NCBIfam" id="NF002764">
    <property type="entry name" value="PRK02833.1-2"/>
    <property type="match status" value="1"/>
</dbReference>
<dbReference type="NCBIfam" id="NF002765">
    <property type="entry name" value="PRK02833.1-3"/>
    <property type="match status" value="1"/>
</dbReference>
<dbReference type="NCBIfam" id="NF002767">
    <property type="entry name" value="PRK02833.1-5"/>
    <property type="match status" value="1"/>
</dbReference>
<dbReference type="PANTHER" id="PTHR37819">
    <property type="entry name" value="PROTEIN PSIE"/>
    <property type="match status" value="1"/>
</dbReference>
<dbReference type="PANTHER" id="PTHR37819:SF1">
    <property type="entry name" value="PROTEIN PSIE"/>
    <property type="match status" value="1"/>
</dbReference>
<dbReference type="Pfam" id="PF06146">
    <property type="entry name" value="PsiE"/>
    <property type="match status" value="1"/>
</dbReference>
<dbReference type="PIRSF" id="PIRSF029598">
    <property type="entry name" value="PsiE"/>
    <property type="match status" value="1"/>
</dbReference>
<protein>
    <recommendedName>
        <fullName evidence="1">Protein PsiE</fullName>
    </recommendedName>
</protein>
<gene>
    <name evidence="1" type="primary">psiE</name>
    <name type="ordered locus">ECDH10B_4219</name>
</gene>
<proteinExistence type="inferred from homology"/>
<keyword id="KW-0997">Cell inner membrane</keyword>
<keyword id="KW-1003">Cell membrane</keyword>
<keyword id="KW-0472">Membrane</keyword>
<keyword id="KW-0812">Transmembrane</keyword>
<keyword id="KW-1133">Transmembrane helix</keyword>